<protein>
    <recommendedName>
        <fullName evidence="1">Urease accessory protein UreF</fullName>
    </recommendedName>
</protein>
<reference key="1">
    <citation type="journal article" date="2011" name="Stand. Genomic Sci.">
        <title>Complete genome sequence of the halophilic and highly halotolerant Chromohalobacter salexigens type strain (1H11(T)).</title>
        <authorList>
            <person name="Copeland A."/>
            <person name="O'Connor K."/>
            <person name="Lucas S."/>
            <person name="Lapidus A."/>
            <person name="Berry K.W."/>
            <person name="Detter J.C."/>
            <person name="Del Rio T.G."/>
            <person name="Hammon N."/>
            <person name="Dalin E."/>
            <person name="Tice H."/>
            <person name="Pitluck S."/>
            <person name="Bruce D."/>
            <person name="Goodwin L."/>
            <person name="Han C."/>
            <person name="Tapia R."/>
            <person name="Saunders E."/>
            <person name="Schmutz J."/>
            <person name="Brettin T."/>
            <person name="Larimer F."/>
            <person name="Land M."/>
            <person name="Hauser L."/>
            <person name="Vargas C."/>
            <person name="Nieto J.J."/>
            <person name="Kyrpides N.C."/>
            <person name="Ivanova N."/>
            <person name="Goker M."/>
            <person name="Klenk H.P."/>
            <person name="Csonka L.N."/>
            <person name="Woyke T."/>
        </authorList>
    </citation>
    <scope>NUCLEOTIDE SEQUENCE [LARGE SCALE GENOMIC DNA]</scope>
    <source>
        <strain>ATCC BAA-138 / DSM 3043 / CIP 106854 / NCIMB 13768 / 1H11</strain>
    </source>
</reference>
<comment type="function">
    <text evidence="1">Required for maturation of urease via the functional incorporation of the urease nickel metallocenter.</text>
</comment>
<comment type="subunit">
    <text evidence="1">UreD, UreF and UreG form a complex that acts as a GTP-hydrolysis-dependent molecular chaperone, activating the urease apoprotein by helping to assemble the nickel containing metallocenter of UreC. The UreE protein probably delivers the nickel.</text>
</comment>
<comment type="subcellular location">
    <subcellularLocation>
        <location evidence="1">Cytoplasm</location>
    </subcellularLocation>
</comment>
<comment type="similarity">
    <text evidence="1">Belongs to the UreF family.</text>
</comment>
<organism>
    <name type="scientific">Chromohalobacter salexigens (strain ATCC BAA-138 / DSM 3043 / CIP 106854 / NCIMB 13768 / 1H11)</name>
    <dbReference type="NCBI Taxonomy" id="290398"/>
    <lineage>
        <taxon>Bacteria</taxon>
        <taxon>Pseudomonadati</taxon>
        <taxon>Pseudomonadota</taxon>
        <taxon>Gammaproteobacteria</taxon>
        <taxon>Oceanospirillales</taxon>
        <taxon>Halomonadaceae</taxon>
        <taxon>Chromohalobacter</taxon>
    </lineage>
</organism>
<gene>
    <name evidence="1" type="primary">ureF</name>
    <name type="ordered locus">Csal_2303</name>
</gene>
<keyword id="KW-0143">Chaperone</keyword>
<keyword id="KW-0963">Cytoplasm</keyword>
<keyword id="KW-0996">Nickel insertion</keyword>
<keyword id="KW-1185">Reference proteome</keyword>
<sequence length="230" mass="24959">MSTEPVSQHDPLALAGLMQLVSPALPIGAFAWSQGLESALELGWVDDEASLGEWLAGVLDDGLTRCELPVLARVHRAWAEGDAQALAHWNDWLQANRETRELLEEEQRLGGTLVRLLRSLDQVPVTPAMPETPGYVVVFALAARVRGVSREDAMLGFAWAWLENQLTVACKALPLGQTSAQRLVERLRPALVAAVSEALALDDDDLGPALPGLALASALHETQYSRLFRS</sequence>
<name>UREF_CHRSD</name>
<feature type="chain" id="PRO_0000344112" description="Urease accessory protein UreF">
    <location>
        <begin position="1"/>
        <end position="230"/>
    </location>
</feature>
<dbReference type="EMBL" id="CP000285">
    <property type="protein sequence ID" value="ABE59653.1"/>
    <property type="molecule type" value="Genomic_DNA"/>
</dbReference>
<dbReference type="RefSeq" id="WP_011507599.1">
    <property type="nucleotide sequence ID" value="NC_007963.1"/>
</dbReference>
<dbReference type="SMR" id="Q1QV55"/>
<dbReference type="STRING" id="290398.Csal_2303"/>
<dbReference type="GeneID" id="95335015"/>
<dbReference type="KEGG" id="csa:Csal_2303"/>
<dbReference type="eggNOG" id="COG0830">
    <property type="taxonomic scope" value="Bacteria"/>
</dbReference>
<dbReference type="HOGENOM" id="CLU_049215_2_1_6"/>
<dbReference type="OrthoDB" id="9798772at2"/>
<dbReference type="Proteomes" id="UP000000239">
    <property type="component" value="Chromosome"/>
</dbReference>
<dbReference type="GO" id="GO:0005737">
    <property type="term" value="C:cytoplasm"/>
    <property type="evidence" value="ECO:0007669"/>
    <property type="project" value="UniProtKB-SubCell"/>
</dbReference>
<dbReference type="GO" id="GO:0016151">
    <property type="term" value="F:nickel cation binding"/>
    <property type="evidence" value="ECO:0007669"/>
    <property type="project" value="UniProtKB-UniRule"/>
</dbReference>
<dbReference type="Gene3D" id="1.10.4190.10">
    <property type="entry name" value="Urease accessory protein UreF"/>
    <property type="match status" value="1"/>
</dbReference>
<dbReference type="HAMAP" id="MF_01385">
    <property type="entry name" value="UreF"/>
    <property type="match status" value="1"/>
</dbReference>
<dbReference type="InterPro" id="IPR002639">
    <property type="entry name" value="UreF"/>
</dbReference>
<dbReference type="InterPro" id="IPR038277">
    <property type="entry name" value="UreF_sf"/>
</dbReference>
<dbReference type="PANTHER" id="PTHR33620">
    <property type="entry name" value="UREASE ACCESSORY PROTEIN F"/>
    <property type="match status" value="1"/>
</dbReference>
<dbReference type="PANTHER" id="PTHR33620:SF1">
    <property type="entry name" value="UREASE ACCESSORY PROTEIN F"/>
    <property type="match status" value="1"/>
</dbReference>
<dbReference type="Pfam" id="PF01730">
    <property type="entry name" value="UreF"/>
    <property type="match status" value="1"/>
</dbReference>
<dbReference type="PIRSF" id="PIRSF009467">
    <property type="entry name" value="Ureas_acces_UreF"/>
    <property type="match status" value="1"/>
</dbReference>
<proteinExistence type="inferred from homology"/>
<evidence type="ECO:0000255" key="1">
    <source>
        <dbReference type="HAMAP-Rule" id="MF_01385"/>
    </source>
</evidence>
<accession>Q1QV55</accession>